<accession>A7GRB0</accession>
<evidence type="ECO:0000255" key="1">
    <source>
        <dbReference type="HAMAP-Rule" id="MF_00226"/>
    </source>
</evidence>
<reference key="1">
    <citation type="journal article" date="2008" name="Chem. Biol. Interact.">
        <title>Extending the Bacillus cereus group genomics to putative food-borne pathogens of different toxicity.</title>
        <authorList>
            <person name="Lapidus A."/>
            <person name="Goltsman E."/>
            <person name="Auger S."/>
            <person name="Galleron N."/>
            <person name="Segurens B."/>
            <person name="Dossat C."/>
            <person name="Land M.L."/>
            <person name="Broussolle V."/>
            <person name="Brillard J."/>
            <person name="Guinebretiere M.-H."/>
            <person name="Sanchis V."/>
            <person name="Nguen-the C."/>
            <person name="Lereclus D."/>
            <person name="Richardson P."/>
            <person name="Wincker P."/>
            <person name="Weissenbach J."/>
            <person name="Ehrlich S.D."/>
            <person name="Sorokin A."/>
        </authorList>
    </citation>
    <scope>NUCLEOTIDE SEQUENCE [LARGE SCALE GENOMIC DNA]</scope>
    <source>
        <strain>DSM 22905 / CIP 110041 / 391-98 / NVH 391-98</strain>
    </source>
</reference>
<protein>
    <recommendedName>
        <fullName evidence="1">Putative competence-damage inducible protein</fullName>
    </recommendedName>
</protein>
<name>CINA_BACCN</name>
<organism>
    <name type="scientific">Bacillus cytotoxicus (strain DSM 22905 / CIP 110041 / 391-98 / NVH 391-98)</name>
    <dbReference type="NCBI Taxonomy" id="315749"/>
    <lineage>
        <taxon>Bacteria</taxon>
        <taxon>Bacillati</taxon>
        <taxon>Bacillota</taxon>
        <taxon>Bacilli</taxon>
        <taxon>Bacillales</taxon>
        <taxon>Bacillaceae</taxon>
        <taxon>Bacillus</taxon>
        <taxon>Bacillus cereus group</taxon>
    </lineage>
</organism>
<proteinExistence type="inferred from homology"/>
<comment type="similarity">
    <text evidence="1">Belongs to the CinA family.</text>
</comment>
<gene>
    <name evidence="1" type="primary">cinA</name>
    <name type="ordered locus">Bcer98_2432</name>
</gene>
<dbReference type="EMBL" id="CP000764">
    <property type="protein sequence ID" value="ABS22668.1"/>
    <property type="molecule type" value="Genomic_DNA"/>
</dbReference>
<dbReference type="RefSeq" id="WP_012094872.1">
    <property type="nucleotide sequence ID" value="NC_009674.1"/>
</dbReference>
<dbReference type="SMR" id="A7GRB0"/>
<dbReference type="STRING" id="315749.Bcer98_2432"/>
<dbReference type="GeneID" id="33897687"/>
<dbReference type="KEGG" id="bcy:Bcer98_2432"/>
<dbReference type="eggNOG" id="COG1058">
    <property type="taxonomic scope" value="Bacteria"/>
</dbReference>
<dbReference type="eggNOG" id="COG1546">
    <property type="taxonomic scope" value="Bacteria"/>
</dbReference>
<dbReference type="HOGENOM" id="CLU_030805_9_3_9"/>
<dbReference type="OrthoDB" id="9801454at2"/>
<dbReference type="Proteomes" id="UP000002300">
    <property type="component" value="Chromosome"/>
</dbReference>
<dbReference type="CDD" id="cd00885">
    <property type="entry name" value="cinA"/>
    <property type="match status" value="1"/>
</dbReference>
<dbReference type="Gene3D" id="3.30.70.2860">
    <property type="match status" value="1"/>
</dbReference>
<dbReference type="Gene3D" id="3.90.950.20">
    <property type="entry name" value="CinA-like"/>
    <property type="match status" value="1"/>
</dbReference>
<dbReference type="Gene3D" id="3.40.980.10">
    <property type="entry name" value="MoaB/Mog-like domain"/>
    <property type="match status" value="1"/>
</dbReference>
<dbReference type="HAMAP" id="MF_00226_B">
    <property type="entry name" value="CinA_B"/>
    <property type="match status" value="1"/>
</dbReference>
<dbReference type="InterPro" id="IPR050101">
    <property type="entry name" value="CinA"/>
</dbReference>
<dbReference type="InterPro" id="IPR036653">
    <property type="entry name" value="CinA-like_C"/>
</dbReference>
<dbReference type="InterPro" id="IPR008136">
    <property type="entry name" value="CinA_C"/>
</dbReference>
<dbReference type="InterPro" id="IPR041424">
    <property type="entry name" value="CinA_KH"/>
</dbReference>
<dbReference type="InterPro" id="IPR008135">
    <property type="entry name" value="Competence-induced_CinA"/>
</dbReference>
<dbReference type="InterPro" id="IPR036425">
    <property type="entry name" value="MoaB/Mog-like_dom_sf"/>
</dbReference>
<dbReference type="InterPro" id="IPR001453">
    <property type="entry name" value="MoaB/Mog_dom"/>
</dbReference>
<dbReference type="NCBIfam" id="TIGR00200">
    <property type="entry name" value="cinA_nterm"/>
    <property type="match status" value="1"/>
</dbReference>
<dbReference type="NCBIfam" id="TIGR00177">
    <property type="entry name" value="molyb_syn"/>
    <property type="match status" value="1"/>
</dbReference>
<dbReference type="NCBIfam" id="TIGR00199">
    <property type="entry name" value="PncC_domain"/>
    <property type="match status" value="1"/>
</dbReference>
<dbReference type="NCBIfam" id="NF001813">
    <property type="entry name" value="PRK00549.1"/>
    <property type="match status" value="1"/>
</dbReference>
<dbReference type="PANTHER" id="PTHR13939">
    <property type="entry name" value="NICOTINAMIDE-NUCLEOTIDE AMIDOHYDROLASE PNCC"/>
    <property type="match status" value="1"/>
</dbReference>
<dbReference type="PANTHER" id="PTHR13939:SF0">
    <property type="entry name" value="NMN AMIDOHYDROLASE-LIKE PROTEIN YFAY"/>
    <property type="match status" value="1"/>
</dbReference>
<dbReference type="Pfam" id="PF02464">
    <property type="entry name" value="CinA"/>
    <property type="match status" value="1"/>
</dbReference>
<dbReference type="Pfam" id="PF18146">
    <property type="entry name" value="CinA_KH"/>
    <property type="match status" value="1"/>
</dbReference>
<dbReference type="Pfam" id="PF00994">
    <property type="entry name" value="MoCF_biosynth"/>
    <property type="match status" value="1"/>
</dbReference>
<dbReference type="PIRSF" id="PIRSF006728">
    <property type="entry name" value="CinA"/>
    <property type="match status" value="1"/>
</dbReference>
<dbReference type="SMART" id="SM00852">
    <property type="entry name" value="MoCF_biosynth"/>
    <property type="match status" value="1"/>
</dbReference>
<dbReference type="SUPFAM" id="SSF142433">
    <property type="entry name" value="CinA-like"/>
    <property type="match status" value="1"/>
</dbReference>
<dbReference type="SUPFAM" id="SSF53218">
    <property type="entry name" value="Molybdenum cofactor biosynthesis proteins"/>
    <property type="match status" value="1"/>
</dbReference>
<sequence>MNAEIIAVGTELLLGQITNTNAKFLSEKLASIGINVYYHTVVGDNTRRLQEAIRTAEKRANILIFTGGLGPTKDDLTKETIASIVKEDLVYDEAALTSIREYFNRTGREFTENNKKQALVLKGSTVFANNHGMAPGMGLHKNEKVYILLPGPPKEMQPMYNSYVDPFLRNVTTGEHIYSRVLRFFGIGESQLEVKVQDLIDNQTNPTIAPLASDGEVTLRLTAKHQNVEQAELLIQQVEHLILERVGEFFYGYNEDFLHHKAIELLKKKGFTLACAESLTGGLFGNQVTENAGVSSVFKGGVICYHNDVKQHILQVPEETLQTAGAVSEECARYLAENVKLLLQSDIGISFTGVAGPDASENKEPGTVFIGLAIKDEPTIVFPLCLSGSRQQIRERTVKYGFYHLYKKLEEM</sequence>
<feature type="chain" id="PRO_1000078170" description="Putative competence-damage inducible protein">
    <location>
        <begin position="1"/>
        <end position="412"/>
    </location>
</feature>